<accession>Q9RJN1</accession>
<gene>
    <name type="primary">arcA</name>
    <name type="ordered locus">SCO0613</name>
    <name type="ORF">SCF55.37</name>
</gene>
<evidence type="ECO:0000250" key="1"/>
<evidence type="ECO:0000305" key="2"/>
<proteinExistence type="inferred from homology"/>
<dbReference type="EC" id="3.5.3.6"/>
<dbReference type="EMBL" id="AL939106">
    <property type="protein sequence ID" value="CAB61307.1"/>
    <property type="molecule type" value="Genomic_DNA"/>
</dbReference>
<dbReference type="RefSeq" id="NP_624925.1">
    <property type="nucleotide sequence ID" value="NC_003888.3"/>
</dbReference>
<dbReference type="RefSeq" id="WP_011027247.1">
    <property type="nucleotide sequence ID" value="NZ_VNID01000004.1"/>
</dbReference>
<dbReference type="SMR" id="Q9RJN1"/>
<dbReference type="FunCoup" id="Q9RJN1">
    <property type="interactions" value="18"/>
</dbReference>
<dbReference type="STRING" id="100226.gene:17758196"/>
<dbReference type="PaxDb" id="100226-SCO0613"/>
<dbReference type="KEGG" id="sco:SCO0613"/>
<dbReference type="PATRIC" id="fig|100226.15.peg.594"/>
<dbReference type="eggNOG" id="COG2235">
    <property type="taxonomic scope" value="Bacteria"/>
</dbReference>
<dbReference type="HOGENOM" id="CLU_052662_0_0_11"/>
<dbReference type="InParanoid" id="Q9RJN1"/>
<dbReference type="OrthoDB" id="9807502at2"/>
<dbReference type="PhylomeDB" id="Q9RJN1"/>
<dbReference type="UniPathway" id="UPA00254">
    <property type="reaction ID" value="UER00364"/>
</dbReference>
<dbReference type="Proteomes" id="UP000001973">
    <property type="component" value="Chromosome"/>
</dbReference>
<dbReference type="GO" id="GO:0005737">
    <property type="term" value="C:cytoplasm"/>
    <property type="evidence" value="ECO:0007669"/>
    <property type="project" value="UniProtKB-SubCell"/>
</dbReference>
<dbReference type="GO" id="GO:0016990">
    <property type="term" value="F:arginine deiminase activity"/>
    <property type="evidence" value="ECO:0000318"/>
    <property type="project" value="GO_Central"/>
</dbReference>
<dbReference type="GO" id="GO:0019547">
    <property type="term" value="P:arginine catabolic process to ornithine"/>
    <property type="evidence" value="ECO:0007669"/>
    <property type="project" value="UniProtKB-UniRule"/>
</dbReference>
<dbReference type="GO" id="GO:0019546">
    <property type="term" value="P:arginine deiminase pathway"/>
    <property type="evidence" value="ECO:0000318"/>
    <property type="project" value="GO_Central"/>
</dbReference>
<dbReference type="FunFam" id="1.10.3930.10:FF:000002">
    <property type="entry name" value="Arginine deiminase"/>
    <property type="match status" value="1"/>
</dbReference>
<dbReference type="Gene3D" id="1.10.3930.10">
    <property type="entry name" value="Arginine deiminase"/>
    <property type="match status" value="1"/>
</dbReference>
<dbReference type="Gene3D" id="3.75.10.10">
    <property type="entry name" value="L-arginine/glycine Amidinotransferase, Chain A"/>
    <property type="match status" value="1"/>
</dbReference>
<dbReference type="HAMAP" id="MF_00242">
    <property type="entry name" value="Arg_deiminase"/>
    <property type="match status" value="1"/>
</dbReference>
<dbReference type="InterPro" id="IPR003876">
    <property type="entry name" value="Arg_deiminase"/>
</dbReference>
<dbReference type="NCBIfam" id="NF002381">
    <property type="entry name" value="PRK01388.1"/>
    <property type="match status" value="1"/>
</dbReference>
<dbReference type="PANTHER" id="PTHR47271">
    <property type="entry name" value="ARGININE DEIMINASE"/>
    <property type="match status" value="1"/>
</dbReference>
<dbReference type="PANTHER" id="PTHR47271:SF3">
    <property type="entry name" value="ARGININE DEIMINASE"/>
    <property type="match status" value="1"/>
</dbReference>
<dbReference type="Pfam" id="PF02274">
    <property type="entry name" value="ADI"/>
    <property type="match status" value="1"/>
</dbReference>
<dbReference type="PIRSF" id="PIRSF006356">
    <property type="entry name" value="Arg_deiminase"/>
    <property type="match status" value="1"/>
</dbReference>
<dbReference type="PRINTS" id="PR01466">
    <property type="entry name" value="ARGDEIMINASE"/>
</dbReference>
<dbReference type="SUPFAM" id="SSF55909">
    <property type="entry name" value="Pentein"/>
    <property type="match status" value="1"/>
</dbReference>
<keyword id="KW-0056">Arginine metabolism</keyword>
<keyword id="KW-0963">Cytoplasm</keyword>
<keyword id="KW-0378">Hydrolase</keyword>
<keyword id="KW-1185">Reference proteome</keyword>
<protein>
    <recommendedName>
        <fullName>Arginine deiminase</fullName>
        <shortName>ADI</shortName>
        <ecNumber>3.5.3.6</ecNumber>
    </recommendedName>
    <alternativeName>
        <fullName>Arginine dihydrolase</fullName>
        <shortName>AD</shortName>
    </alternativeName>
</protein>
<organism>
    <name type="scientific">Streptomyces coelicolor (strain ATCC BAA-471 / A3(2) / M145)</name>
    <dbReference type="NCBI Taxonomy" id="100226"/>
    <lineage>
        <taxon>Bacteria</taxon>
        <taxon>Bacillati</taxon>
        <taxon>Actinomycetota</taxon>
        <taxon>Actinomycetes</taxon>
        <taxon>Kitasatosporales</taxon>
        <taxon>Streptomycetaceae</taxon>
        <taxon>Streptomyces</taxon>
        <taxon>Streptomyces albidoflavus group</taxon>
    </lineage>
</organism>
<feature type="chain" id="PRO_0000182245" description="Arginine deiminase">
    <location>
        <begin position="1"/>
        <end position="420"/>
    </location>
</feature>
<feature type="active site" description="Amidino-cysteine intermediate" evidence="1">
    <location>
        <position position="408"/>
    </location>
</feature>
<comment type="catalytic activity">
    <reaction>
        <text>L-arginine + H2O = L-citrulline + NH4(+)</text>
        <dbReference type="Rhea" id="RHEA:19597"/>
        <dbReference type="ChEBI" id="CHEBI:15377"/>
        <dbReference type="ChEBI" id="CHEBI:28938"/>
        <dbReference type="ChEBI" id="CHEBI:32682"/>
        <dbReference type="ChEBI" id="CHEBI:57743"/>
        <dbReference type="EC" id="3.5.3.6"/>
    </reaction>
</comment>
<comment type="pathway">
    <text>Amino-acid degradation; L-arginine degradation via ADI pathway; carbamoyl phosphate from L-arginine: step 1/2.</text>
</comment>
<comment type="subcellular location">
    <subcellularLocation>
        <location evidence="2">Cytoplasm</location>
    </subcellularLocation>
</comment>
<comment type="similarity">
    <text evidence="2">Belongs to the arginine deiminase family.</text>
</comment>
<sequence length="420" mass="46169">MTSNESAVSQALGVHSEVGRLRKVLVCSPGLAHRRLTPTNSDELLFDDVMWVENAQRDHAAFVGELRRRGVEVVELHDLLAQIMALPEARAWLLDRKITANQVGIGLIDAARAYLETLSPRELAEYLVGGLATSDLPEDFRSPHLALARESTGAREYLMPPLPNTLYTRDTTCWLYGGLTLNPLYWSARHDETLLMKAIYTFHPDFKGSKVWWGDPERDWGQATFEGGDIMPVGNGVVLMGMSERTSRQAITQVAAALFRSGAAEHVVVAGMPKLRSAMHLDTVFTFADRDVVTLYPRIMDAVHTFSLRPGDRAPGFDVVDEGSTPFVDVVAKALGLPKLRVVETGGDAYASERQQWDSGNNAVAVEPGVVFTYDRNTLTNALLREARVEVVTIVGAELGRGRGGGHCMTCPLVREPVDF</sequence>
<reference key="1">
    <citation type="journal article" date="2002" name="Nature">
        <title>Complete genome sequence of the model actinomycete Streptomyces coelicolor A3(2).</title>
        <authorList>
            <person name="Bentley S.D."/>
            <person name="Chater K.F."/>
            <person name="Cerdeno-Tarraga A.-M."/>
            <person name="Challis G.L."/>
            <person name="Thomson N.R."/>
            <person name="James K.D."/>
            <person name="Harris D.E."/>
            <person name="Quail M.A."/>
            <person name="Kieser H."/>
            <person name="Harper D."/>
            <person name="Bateman A."/>
            <person name="Brown S."/>
            <person name="Chandra G."/>
            <person name="Chen C.W."/>
            <person name="Collins M."/>
            <person name="Cronin A."/>
            <person name="Fraser A."/>
            <person name="Goble A."/>
            <person name="Hidalgo J."/>
            <person name="Hornsby T."/>
            <person name="Howarth S."/>
            <person name="Huang C.-H."/>
            <person name="Kieser T."/>
            <person name="Larke L."/>
            <person name="Murphy L.D."/>
            <person name="Oliver K."/>
            <person name="O'Neil S."/>
            <person name="Rabbinowitsch E."/>
            <person name="Rajandream M.A."/>
            <person name="Rutherford K.M."/>
            <person name="Rutter S."/>
            <person name="Seeger K."/>
            <person name="Saunders D."/>
            <person name="Sharp S."/>
            <person name="Squares R."/>
            <person name="Squares S."/>
            <person name="Taylor K."/>
            <person name="Warren T."/>
            <person name="Wietzorrek A."/>
            <person name="Woodward J.R."/>
            <person name="Barrell B.G."/>
            <person name="Parkhill J."/>
            <person name="Hopwood D.A."/>
        </authorList>
    </citation>
    <scope>NUCLEOTIDE SEQUENCE [LARGE SCALE GENOMIC DNA]</scope>
    <source>
        <strain>ATCC BAA-471 / A3(2) / M145</strain>
    </source>
</reference>
<name>ARCA_STRCO</name>